<reference key="1">
    <citation type="journal article" date="1997" name="J. Bacteriol.">
        <title>Complete genome sequence of Methanobacterium thermoautotrophicum deltaH: functional analysis and comparative genomics.</title>
        <authorList>
            <person name="Smith D.R."/>
            <person name="Doucette-Stamm L.A."/>
            <person name="Deloughery C."/>
            <person name="Lee H.-M."/>
            <person name="Dubois J."/>
            <person name="Aldredge T."/>
            <person name="Bashirzadeh R."/>
            <person name="Blakely D."/>
            <person name="Cook R."/>
            <person name="Gilbert K."/>
            <person name="Harrison D."/>
            <person name="Hoang L."/>
            <person name="Keagle P."/>
            <person name="Lumm W."/>
            <person name="Pothier B."/>
            <person name="Qiu D."/>
            <person name="Spadafora R."/>
            <person name="Vicare R."/>
            <person name="Wang Y."/>
            <person name="Wierzbowski J."/>
            <person name="Gibson R."/>
            <person name="Jiwani N."/>
            <person name="Caruso A."/>
            <person name="Bush D."/>
            <person name="Safer H."/>
            <person name="Patwell D."/>
            <person name="Prabhakar S."/>
            <person name="McDougall S."/>
            <person name="Shimer G."/>
            <person name="Goyal A."/>
            <person name="Pietrovski S."/>
            <person name="Church G.M."/>
            <person name="Daniels C.J."/>
            <person name="Mao J.-I."/>
            <person name="Rice P."/>
            <person name="Noelling J."/>
            <person name="Reeve J.N."/>
        </authorList>
    </citation>
    <scope>NUCLEOTIDE SEQUENCE [LARGE SCALE GENOMIC DNA]</scope>
    <source>
        <strain>ATCC 29096 / DSM 1053 / JCM 10044 / NBRC 100330 / Delta H</strain>
    </source>
</reference>
<protein>
    <recommendedName>
        <fullName>DNA polymerase II small subunit</fullName>
        <shortName>Pol II</shortName>
        <ecNumber>2.7.7.7</ecNumber>
    </recommendedName>
    <alternativeName>
        <fullName>Exodeoxyribonuclease small subunit</fullName>
        <ecNumber>3.1.11.1</ecNumber>
    </alternativeName>
</protein>
<accession>O27456</accession>
<comment type="function">
    <text evidence="1">Possesses two activities: a DNA synthesis (polymerase) and an exonucleolytic activity that degrades single-stranded DNA in the 3' to 5' direction. Has a template-primer preference which is characteristic of a replicative DNA polymerase (By similarity).</text>
</comment>
<comment type="catalytic activity">
    <reaction>
        <text>DNA(n) + a 2'-deoxyribonucleoside 5'-triphosphate = DNA(n+1) + diphosphate</text>
        <dbReference type="Rhea" id="RHEA:22508"/>
        <dbReference type="Rhea" id="RHEA-COMP:17339"/>
        <dbReference type="Rhea" id="RHEA-COMP:17340"/>
        <dbReference type="ChEBI" id="CHEBI:33019"/>
        <dbReference type="ChEBI" id="CHEBI:61560"/>
        <dbReference type="ChEBI" id="CHEBI:173112"/>
        <dbReference type="EC" id="2.7.7.7"/>
    </reaction>
</comment>
<comment type="catalytic activity">
    <reaction>
        <text>Exonucleolytic cleavage in the 3'- to 5'-direction to yield nucleoside 5'-phosphates.</text>
        <dbReference type="EC" id="3.1.11.1"/>
    </reaction>
</comment>
<comment type="subunit">
    <text evidence="1">Heterodimer of a large subunit and a small subunit.</text>
</comment>
<comment type="similarity">
    <text evidence="2">Belongs to the DNA polymerase delta/II small subunit family.</text>
</comment>
<keyword id="KW-0235">DNA replication</keyword>
<keyword id="KW-0238">DNA-binding</keyword>
<keyword id="KW-0239">DNA-directed DNA polymerase</keyword>
<keyword id="KW-0269">Exonuclease</keyword>
<keyword id="KW-0378">Hydrolase</keyword>
<keyword id="KW-0511">Multifunctional enzyme</keyword>
<keyword id="KW-0540">Nuclease</keyword>
<keyword id="KW-0548">Nucleotidyltransferase</keyword>
<keyword id="KW-1185">Reference proteome</keyword>
<keyword id="KW-0808">Transferase</keyword>
<name>DP2S_METTH</name>
<dbReference type="EC" id="2.7.7.7"/>
<dbReference type="EC" id="3.1.11.1"/>
<dbReference type="EMBL" id="AE000666">
    <property type="protein sequence ID" value="AAB85882.1"/>
    <property type="molecule type" value="Genomic_DNA"/>
</dbReference>
<dbReference type="PIR" id="B69054">
    <property type="entry name" value="B69054"/>
</dbReference>
<dbReference type="RefSeq" id="WP_010877017.1">
    <property type="nucleotide sequence ID" value="NC_000916.1"/>
</dbReference>
<dbReference type="SMR" id="O27456"/>
<dbReference type="FunCoup" id="O27456">
    <property type="interactions" value="11"/>
</dbReference>
<dbReference type="STRING" id="187420.MTH_1405"/>
<dbReference type="PaxDb" id="187420-MTH_1405"/>
<dbReference type="EnsemblBacteria" id="AAB85882">
    <property type="protein sequence ID" value="AAB85882"/>
    <property type="gene ID" value="MTH_1405"/>
</dbReference>
<dbReference type="KEGG" id="mth:MTH_1405"/>
<dbReference type="PATRIC" id="fig|187420.15.peg.1370"/>
<dbReference type="HOGENOM" id="CLU_027850_1_0_2"/>
<dbReference type="InParanoid" id="O27456"/>
<dbReference type="Proteomes" id="UP000005223">
    <property type="component" value="Chromosome"/>
</dbReference>
<dbReference type="GO" id="GO:0042575">
    <property type="term" value="C:DNA polymerase complex"/>
    <property type="evidence" value="ECO:0007669"/>
    <property type="project" value="TreeGrafter"/>
</dbReference>
<dbReference type="GO" id="GO:0003677">
    <property type="term" value="F:DNA binding"/>
    <property type="evidence" value="ECO:0007669"/>
    <property type="project" value="UniProtKB-UniRule"/>
</dbReference>
<dbReference type="GO" id="GO:0003887">
    <property type="term" value="F:DNA-directed DNA polymerase activity"/>
    <property type="evidence" value="ECO:0007669"/>
    <property type="project" value="UniProtKB-UniRule"/>
</dbReference>
<dbReference type="GO" id="GO:0008310">
    <property type="term" value="F:single-stranded DNA 3'-5' DNA exonuclease activity"/>
    <property type="evidence" value="ECO:0007669"/>
    <property type="project" value="UniProtKB-EC"/>
</dbReference>
<dbReference type="GO" id="GO:0006308">
    <property type="term" value="P:DNA catabolic process"/>
    <property type="evidence" value="ECO:0007669"/>
    <property type="project" value="UniProtKB-UniRule"/>
</dbReference>
<dbReference type="GO" id="GO:0006271">
    <property type="term" value="P:DNA strand elongation involved in DNA replication"/>
    <property type="evidence" value="ECO:0007669"/>
    <property type="project" value="TreeGrafter"/>
</dbReference>
<dbReference type="CDD" id="cd07386">
    <property type="entry name" value="MPP_DNA_pol_II_small_archeal_C"/>
    <property type="match status" value="1"/>
</dbReference>
<dbReference type="CDD" id="cd04490">
    <property type="entry name" value="PolII_SU_OBF"/>
    <property type="match status" value="1"/>
</dbReference>
<dbReference type="Gene3D" id="3.60.21.50">
    <property type="match status" value="1"/>
</dbReference>
<dbReference type="Gene3D" id="2.40.50.140">
    <property type="entry name" value="Nucleic acid-binding proteins"/>
    <property type="match status" value="1"/>
</dbReference>
<dbReference type="HAMAP" id="MF_00325">
    <property type="entry name" value="DNApol_II_A_arch"/>
    <property type="match status" value="1"/>
</dbReference>
<dbReference type="InterPro" id="IPR007185">
    <property type="entry name" value="DNA_pol_a/d/e_bsu"/>
</dbReference>
<dbReference type="InterPro" id="IPR024826">
    <property type="entry name" value="DNA_pol_delta/II_ssu"/>
</dbReference>
<dbReference type="InterPro" id="IPR029052">
    <property type="entry name" value="Metallo-depent_PP-like"/>
</dbReference>
<dbReference type="InterPro" id="IPR012340">
    <property type="entry name" value="NA-bd_OB-fold"/>
</dbReference>
<dbReference type="InterPro" id="IPR004365">
    <property type="entry name" value="NA-bd_OB_tRNA"/>
</dbReference>
<dbReference type="InterPro" id="IPR011149">
    <property type="entry name" value="Pol2_small_arc"/>
</dbReference>
<dbReference type="NCBIfam" id="NF003118">
    <property type="entry name" value="PRK04036.1-3"/>
    <property type="match status" value="1"/>
</dbReference>
<dbReference type="NCBIfam" id="NF003120">
    <property type="entry name" value="PRK04036.1-5"/>
    <property type="match status" value="1"/>
</dbReference>
<dbReference type="PANTHER" id="PTHR10416">
    <property type="entry name" value="DNA POLYMERASE DELTA SUBUNIT 2"/>
    <property type="match status" value="1"/>
</dbReference>
<dbReference type="PANTHER" id="PTHR10416:SF0">
    <property type="entry name" value="DNA POLYMERASE DELTA SUBUNIT 2"/>
    <property type="match status" value="1"/>
</dbReference>
<dbReference type="Pfam" id="PF04042">
    <property type="entry name" value="DNA_pol_E_B"/>
    <property type="match status" value="1"/>
</dbReference>
<dbReference type="Pfam" id="PF01336">
    <property type="entry name" value="tRNA_anti-codon"/>
    <property type="match status" value="1"/>
</dbReference>
<dbReference type="PIRSF" id="PIRSF000803">
    <property type="entry name" value="Arc_Pol2_small"/>
    <property type="match status" value="1"/>
</dbReference>
<dbReference type="SUPFAM" id="SSF56300">
    <property type="entry name" value="Metallo-dependent phosphatases"/>
    <property type="match status" value="1"/>
</dbReference>
<dbReference type="SUPFAM" id="SSF50249">
    <property type="entry name" value="Nucleic acid-binding proteins"/>
    <property type="match status" value="1"/>
</dbReference>
<sequence>MNEIIGKFAREGILIEDNAYFRLREMDDPASVSSELIVKIKSNGGKFTVLTSEMLDEFFEIDNPAEIKARGPLMVPAERDFDFEVISDTSNRSYTSGEIGDMIAYFNSRYSSLKNLLSKRPELKGHIPIADLRGGEDVVSIIGMVNDVRNTKNNHRIIELEDDTGEISVVVHNENHKLFEKSEKIVRDEVVGVHGTKKGRFVVASEIFHPGVPRIQEKEMDFSVAFISDVHIGSQTFLEDAFMKFVKWINGDFGSEEQRSLAADVKYLVVAGDIVDGIGIYPGQEKELLIRDIHEQYEEAARLFGDIRSDIKIVMIPGNHDSSRIAEPQPAIPEEYAKSLYSIRNIEFLSNPSLVSLDGVRTLIYHGRSFDDMAMSVNGLSHERSDLIMEELLEKRHLAPIYGERTPLASEIEDHLVIDEVPHVLHTGHVHINAYKKYKGVHLINSGTFQSQTEFQKIYNIVPTCGQVPVLNRGVMKLLEFS</sequence>
<proteinExistence type="inferred from homology"/>
<gene>
    <name type="primary">polB</name>
    <name type="ordered locus">MTH_1405</name>
</gene>
<organism>
    <name type="scientific">Methanothermobacter thermautotrophicus (strain ATCC 29096 / DSM 1053 / JCM 10044 / NBRC 100330 / Delta H)</name>
    <name type="common">Methanobacterium thermoautotrophicum</name>
    <dbReference type="NCBI Taxonomy" id="187420"/>
    <lineage>
        <taxon>Archaea</taxon>
        <taxon>Methanobacteriati</taxon>
        <taxon>Methanobacteriota</taxon>
        <taxon>Methanomada group</taxon>
        <taxon>Methanobacteria</taxon>
        <taxon>Methanobacteriales</taxon>
        <taxon>Methanobacteriaceae</taxon>
        <taxon>Methanothermobacter</taxon>
    </lineage>
</organism>
<evidence type="ECO:0000250" key="1"/>
<evidence type="ECO:0000305" key="2"/>
<feature type="chain" id="PRO_0000096178" description="DNA polymerase II small subunit">
    <location>
        <begin position="1"/>
        <end position="482"/>
    </location>
</feature>